<dbReference type="EMBL" id="AE014075">
    <property type="protein sequence ID" value="AAN78547.1"/>
    <property type="molecule type" value="Genomic_DNA"/>
</dbReference>
<dbReference type="RefSeq" id="WP_000787104.1">
    <property type="nucleotide sequence ID" value="NZ_CP051263.1"/>
</dbReference>
<dbReference type="SMR" id="P59333"/>
<dbReference type="STRING" id="199310.c0049"/>
<dbReference type="KEGG" id="ecc:c0049"/>
<dbReference type="eggNOG" id="COG1292">
    <property type="taxonomic scope" value="Bacteria"/>
</dbReference>
<dbReference type="HOGENOM" id="CLU_010118_6_0_6"/>
<dbReference type="BioCyc" id="ECOL199310:C0049-MONOMER"/>
<dbReference type="UniPathway" id="UPA00117"/>
<dbReference type="Proteomes" id="UP000001410">
    <property type="component" value="Chromosome"/>
</dbReference>
<dbReference type="GO" id="GO:0005886">
    <property type="term" value="C:plasma membrane"/>
    <property type="evidence" value="ECO:0007669"/>
    <property type="project" value="UniProtKB-SubCell"/>
</dbReference>
<dbReference type="GO" id="GO:0044667">
    <property type="term" value="F:(R)-carnitine:4-(trimethylammonio)butanoate antiporter activity"/>
    <property type="evidence" value="ECO:0007669"/>
    <property type="project" value="UniProtKB-UniRule"/>
</dbReference>
<dbReference type="GO" id="GO:1900751">
    <property type="term" value="P:4-(trimethylammonio)butanoate transport"/>
    <property type="evidence" value="ECO:0007669"/>
    <property type="project" value="InterPro"/>
</dbReference>
<dbReference type="GO" id="GO:0009437">
    <property type="term" value="P:carnitine metabolic process"/>
    <property type="evidence" value="ECO:0007669"/>
    <property type="project" value="UniProtKB-UniRule"/>
</dbReference>
<dbReference type="HAMAP" id="MF_01049">
    <property type="entry name" value="CaiT"/>
    <property type="match status" value="1"/>
</dbReference>
<dbReference type="InterPro" id="IPR018093">
    <property type="entry name" value="BCCT_CS"/>
</dbReference>
<dbReference type="InterPro" id="IPR000060">
    <property type="entry name" value="BCCT_transptr"/>
</dbReference>
<dbReference type="InterPro" id="IPR023449">
    <property type="entry name" value="BCCT_transptr_CaiT"/>
</dbReference>
<dbReference type="NCBIfam" id="TIGR00842">
    <property type="entry name" value="bcct"/>
    <property type="match status" value="1"/>
</dbReference>
<dbReference type="NCBIfam" id="NF002887">
    <property type="entry name" value="PRK03356.1"/>
    <property type="match status" value="1"/>
</dbReference>
<dbReference type="PANTHER" id="PTHR30047">
    <property type="entry name" value="HIGH-AFFINITY CHOLINE TRANSPORT PROTEIN-RELATED"/>
    <property type="match status" value="1"/>
</dbReference>
<dbReference type="PANTHER" id="PTHR30047:SF11">
    <property type="entry name" value="L-CARNITINE_GAMMA-BUTYROBETAINE ANTIPORTER"/>
    <property type="match status" value="1"/>
</dbReference>
<dbReference type="Pfam" id="PF02028">
    <property type="entry name" value="BCCT"/>
    <property type="match status" value="1"/>
</dbReference>
<dbReference type="PROSITE" id="PS01303">
    <property type="entry name" value="BCCT"/>
    <property type="match status" value="1"/>
</dbReference>
<reference key="1">
    <citation type="journal article" date="2002" name="Proc. Natl. Acad. Sci. U.S.A.">
        <title>Extensive mosaic structure revealed by the complete genome sequence of uropathogenic Escherichia coli.</title>
        <authorList>
            <person name="Welch R.A."/>
            <person name="Burland V."/>
            <person name="Plunkett G. III"/>
            <person name="Redford P."/>
            <person name="Roesch P."/>
            <person name="Rasko D."/>
            <person name="Buckles E.L."/>
            <person name="Liou S.-R."/>
            <person name="Boutin A."/>
            <person name="Hackett J."/>
            <person name="Stroud D."/>
            <person name="Mayhew G.F."/>
            <person name="Rose D.J."/>
            <person name="Zhou S."/>
            <person name="Schwartz D.C."/>
            <person name="Perna N.T."/>
            <person name="Mobley H.L.T."/>
            <person name="Donnenberg M.S."/>
            <person name="Blattner F.R."/>
        </authorList>
    </citation>
    <scope>NUCLEOTIDE SEQUENCE [LARGE SCALE GENOMIC DNA]</scope>
    <source>
        <strain>CFT073 / ATCC 700928 / UPEC</strain>
    </source>
</reference>
<organism>
    <name type="scientific">Escherichia coli O6:H1 (strain CFT073 / ATCC 700928 / UPEC)</name>
    <dbReference type="NCBI Taxonomy" id="199310"/>
    <lineage>
        <taxon>Bacteria</taxon>
        <taxon>Pseudomonadati</taxon>
        <taxon>Pseudomonadota</taxon>
        <taxon>Gammaproteobacteria</taxon>
        <taxon>Enterobacterales</taxon>
        <taxon>Enterobacteriaceae</taxon>
        <taxon>Escherichia</taxon>
    </lineage>
</organism>
<comment type="function">
    <text evidence="1">Catalyzes the exchange of L-carnitine for gamma-butyrobetaine.</text>
</comment>
<comment type="catalytic activity">
    <reaction evidence="1">
        <text>4-(trimethylamino)butanoate(in) + (R)-carnitine(out) = 4-(trimethylamino)butanoate(out) + (R)-carnitine(in)</text>
        <dbReference type="Rhea" id="RHEA:29427"/>
        <dbReference type="ChEBI" id="CHEBI:16244"/>
        <dbReference type="ChEBI" id="CHEBI:16347"/>
    </reaction>
</comment>
<comment type="pathway">
    <text evidence="1">Amine and polyamine metabolism; carnitine metabolism.</text>
</comment>
<comment type="subunit">
    <text evidence="1">Homotrimer.</text>
</comment>
<comment type="subcellular location">
    <subcellularLocation>
        <location evidence="1">Cell inner membrane</location>
        <topology evidence="1">Multi-pass membrane protein</topology>
    </subcellularLocation>
</comment>
<comment type="similarity">
    <text evidence="1">Belongs to the BCCT transporter (TC 2.A.15) family. CaiT subfamily.</text>
</comment>
<protein>
    <recommendedName>
        <fullName evidence="1">L-carnitine/gamma-butyrobetaine antiporter</fullName>
    </recommendedName>
</protein>
<feature type="chain" id="PRO_0000201487" description="L-carnitine/gamma-butyrobetaine antiporter">
    <location>
        <begin position="1"/>
        <end position="504"/>
    </location>
</feature>
<feature type="transmembrane region" description="Helical" evidence="1">
    <location>
        <begin position="10"/>
        <end position="30"/>
    </location>
</feature>
<feature type="transmembrane region" description="Helical" evidence="1">
    <location>
        <begin position="51"/>
        <end position="71"/>
    </location>
</feature>
<feature type="transmembrane region" description="Helical" evidence="1">
    <location>
        <begin position="92"/>
        <end position="112"/>
    </location>
</feature>
<feature type="transmembrane region" description="Helical" evidence="1">
    <location>
        <begin position="143"/>
        <end position="163"/>
    </location>
</feature>
<feature type="transmembrane region" description="Helical" evidence="1">
    <location>
        <begin position="195"/>
        <end position="215"/>
    </location>
</feature>
<feature type="transmembrane region" description="Helical" evidence="1">
    <location>
        <begin position="231"/>
        <end position="251"/>
    </location>
</feature>
<feature type="transmembrane region" description="Helical" evidence="1">
    <location>
        <begin position="263"/>
        <end position="283"/>
    </location>
</feature>
<feature type="transmembrane region" description="Helical" evidence="1">
    <location>
        <begin position="316"/>
        <end position="336"/>
    </location>
</feature>
<feature type="transmembrane region" description="Helical" evidence="1">
    <location>
        <begin position="347"/>
        <end position="367"/>
    </location>
</feature>
<feature type="transmembrane region" description="Helical" evidence="1">
    <location>
        <begin position="398"/>
        <end position="418"/>
    </location>
</feature>
<feature type="transmembrane region" description="Helical" evidence="1">
    <location>
        <begin position="446"/>
        <end position="466"/>
    </location>
</feature>
<feature type="transmembrane region" description="Helical" evidence="1">
    <location>
        <begin position="475"/>
        <end position="495"/>
    </location>
</feature>
<proteinExistence type="inferred from homology"/>
<keyword id="KW-0050">Antiport</keyword>
<keyword id="KW-0997">Cell inner membrane</keyword>
<keyword id="KW-1003">Cell membrane</keyword>
<keyword id="KW-0472">Membrane</keyword>
<keyword id="KW-1185">Reference proteome</keyword>
<keyword id="KW-0812">Transmembrane</keyword>
<keyword id="KW-1133">Transmembrane helix</keyword>
<keyword id="KW-0813">Transport</keyword>
<sequence>MKNEKRKTGIEPKVFFPPLIIVGILCWLTVRDLDAANVVINAVFSYVTNVWGWAFEWYMVVMLFGWFWLVFGPYAKKRLGNEPPEFSTASWIFMMFASCTSAAVLFWGSIEIYYYISTPPFGLEPNSTGAKELGLAYSLFHWGPLPWATYSFLSVAFAYFFFVRKMEVIRPSSTLVPLVGEKHAKGLFGTIVDNFYLVALIFAMGTSLGLATPLVTECMQWLFGIPHTLQLDAIIITCWIILNAICVACGLQKGVRIASDVRSYLSFLMLGWVFIVSGASFIMNYFTDSVGMLLMYLPRMLFYTDPIAKGGFPQGWTVFYWAWWVIYAIQMSIFLARISRGRTVRELCFGMVLGLTASTWILWTVLGSNTLLLIDKNIINIPNLIEQYGVARAIIETWAALPLSTATMWGFFILCFIATVTLVNACSYTLAMSTCREVRDGEEPPLLVRIGWSVLVGIIGIVLLALGGLKPIQTAIIAGGCPLFFVNIMVTLSFIKDAKQNWKD</sequence>
<name>CAIT_ECOL6</name>
<accession>P59333</accession>
<gene>
    <name evidence="1" type="primary">caiT</name>
    <name type="ordered locus">c0049</name>
</gene>
<evidence type="ECO:0000255" key="1">
    <source>
        <dbReference type="HAMAP-Rule" id="MF_01049"/>
    </source>
</evidence>